<dbReference type="EMBL" id="AE000511">
    <property type="protein sequence ID" value="AAD07933.1"/>
    <property type="molecule type" value="Genomic_DNA"/>
</dbReference>
<dbReference type="PIR" id="E64630">
    <property type="entry name" value="E64630"/>
</dbReference>
<dbReference type="RefSeq" id="NP_207678.1">
    <property type="nucleotide sequence ID" value="NC_000915.1"/>
</dbReference>
<dbReference type="SMR" id="O25551"/>
<dbReference type="FunCoup" id="O25551">
    <property type="interactions" value="217"/>
</dbReference>
<dbReference type="STRING" id="85962.HP_0885"/>
<dbReference type="PaxDb" id="85962-C694_04535"/>
<dbReference type="EnsemblBacteria" id="AAD07933">
    <property type="protein sequence ID" value="AAD07933"/>
    <property type="gene ID" value="HP_0885"/>
</dbReference>
<dbReference type="KEGG" id="hpy:HP_0885"/>
<dbReference type="PATRIC" id="fig|85962.8.peg.917"/>
<dbReference type="eggNOG" id="COG0728">
    <property type="taxonomic scope" value="Bacteria"/>
</dbReference>
<dbReference type="InParanoid" id="O25551"/>
<dbReference type="OrthoDB" id="9786339at2"/>
<dbReference type="PhylomeDB" id="O25551"/>
<dbReference type="UniPathway" id="UPA00219"/>
<dbReference type="Proteomes" id="UP000000429">
    <property type="component" value="Chromosome"/>
</dbReference>
<dbReference type="GO" id="GO:0005886">
    <property type="term" value="C:plasma membrane"/>
    <property type="evidence" value="ECO:0007669"/>
    <property type="project" value="UniProtKB-SubCell"/>
</dbReference>
<dbReference type="GO" id="GO:0015648">
    <property type="term" value="F:lipid-linked peptidoglycan transporter activity"/>
    <property type="evidence" value="ECO:0007669"/>
    <property type="project" value="UniProtKB-UniRule"/>
</dbReference>
<dbReference type="GO" id="GO:0071555">
    <property type="term" value="P:cell wall organization"/>
    <property type="evidence" value="ECO:0007669"/>
    <property type="project" value="UniProtKB-KW"/>
</dbReference>
<dbReference type="GO" id="GO:0009252">
    <property type="term" value="P:peptidoglycan biosynthetic process"/>
    <property type="evidence" value="ECO:0007669"/>
    <property type="project" value="UniProtKB-UniRule"/>
</dbReference>
<dbReference type="GO" id="GO:0008360">
    <property type="term" value="P:regulation of cell shape"/>
    <property type="evidence" value="ECO:0007669"/>
    <property type="project" value="UniProtKB-KW"/>
</dbReference>
<dbReference type="CDD" id="cd13123">
    <property type="entry name" value="MATE_MurJ_like"/>
    <property type="match status" value="1"/>
</dbReference>
<dbReference type="HAMAP" id="MF_02078">
    <property type="entry name" value="MurJ_MviN"/>
    <property type="match status" value="1"/>
</dbReference>
<dbReference type="InterPro" id="IPR004268">
    <property type="entry name" value="MurJ"/>
</dbReference>
<dbReference type="NCBIfam" id="TIGR01695">
    <property type="entry name" value="murJ_mviN"/>
    <property type="match status" value="1"/>
</dbReference>
<dbReference type="PANTHER" id="PTHR43486">
    <property type="entry name" value="LIPID II FLIPPASE MURJ-RELATED"/>
    <property type="match status" value="1"/>
</dbReference>
<dbReference type="PANTHER" id="PTHR43486:SF1">
    <property type="entry name" value="LIPID II FLIPPASE MURJ-RELATED"/>
    <property type="match status" value="1"/>
</dbReference>
<dbReference type="Pfam" id="PF03023">
    <property type="entry name" value="MurJ"/>
    <property type="match status" value="1"/>
</dbReference>
<dbReference type="PRINTS" id="PR01806">
    <property type="entry name" value="VIRFACTRMVIN"/>
</dbReference>
<evidence type="ECO:0000255" key="1">
    <source>
        <dbReference type="HAMAP-Rule" id="MF_02078"/>
    </source>
</evidence>
<comment type="function">
    <text evidence="1">Involved in peptidoglycan biosynthesis. Transports lipid-linked peptidoglycan precursors from the inner to the outer leaflet of the cytoplasmic membrane.</text>
</comment>
<comment type="pathway">
    <text evidence="1">Cell wall biogenesis; peptidoglycan biosynthesis.</text>
</comment>
<comment type="subcellular location">
    <subcellularLocation>
        <location evidence="1">Cell inner membrane</location>
        <topology evidence="1">Multi-pass membrane protein</topology>
    </subcellularLocation>
</comment>
<comment type="similarity">
    <text evidence="1">Belongs to the MurJ/MviN family.</text>
</comment>
<feature type="chain" id="PRO_0000182009" description="Probable lipid II flippase MurJ">
    <location>
        <begin position="1"/>
        <end position="461"/>
    </location>
</feature>
<feature type="transmembrane region" description="Helical" evidence="1">
    <location>
        <begin position="5"/>
        <end position="25"/>
    </location>
</feature>
<feature type="transmembrane region" description="Helical" evidence="1">
    <location>
        <begin position="51"/>
        <end position="71"/>
    </location>
</feature>
<feature type="transmembrane region" description="Helical" evidence="1">
    <location>
        <begin position="96"/>
        <end position="116"/>
    </location>
</feature>
<feature type="transmembrane region" description="Helical" evidence="1">
    <location>
        <begin position="123"/>
        <end position="143"/>
    </location>
</feature>
<feature type="transmembrane region" description="Helical" evidence="1">
    <location>
        <begin position="156"/>
        <end position="176"/>
    </location>
</feature>
<feature type="transmembrane region" description="Helical" evidence="1">
    <location>
        <begin position="229"/>
        <end position="249"/>
    </location>
</feature>
<feature type="transmembrane region" description="Helical" evidence="1">
    <location>
        <begin position="258"/>
        <end position="278"/>
    </location>
</feature>
<feature type="transmembrane region" description="Helical" evidence="1">
    <location>
        <begin position="293"/>
        <end position="313"/>
    </location>
</feature>
<feature type="transmembrane region" description="Helical" evidence="1">
    <location>
        <begin position="337"/>
        <end position="357"/>
    </location>
</feature>
<feature type="transmembrane region" description="Helical" evidence="1">
    <location>
        <begin position="372"/>
        <end position="392"/>
    </location>
</feature>
<feature type="transmembrane region" description="Helical" evidence="1">
    <location>
        <begin position="402"/>
        <end position="422"/>
    </location>
</feature>
<feature type="transmembrane region" description="Helical" evidence="1">
    <location>
        <begin position="429"/>
        <end position="449"/>
    </location>
</feature>
<accession>O25551</accession>
<keyword id="KW-0997">Cell inner membrane</keyword>
<keyword id="KW-1003">Cell membrane</keyword>
<keyword id="KW-0133">Cell shape</keyword>
<keyword id="KW-0961">Cell wall biogenesis/degradation</keyword>
<keyword id="KW-0472">Membrane</keyword>
<keyword id="KW-0573">Peptidoglycan synthesis</keyword>
<keyword id="KW-1185">Reference proteome</keyword>
<keyword id="KW-0812">Transmembrane</keyword>
<keyword id="KW-1133">Transmembrane helix</keyword>
<keyword id="KW-0813">Transport</keyword>
<reference key="1">
    <citation type="journal article" date="1997" name="Nature">
        <title>The complete genome sequence of the gastric pathogen Helicobacter pylori.</title>
        <authorList>
            <person name="Tomb J.-F."/>
            <person name="White O."/>
            <person name="Kerlavage A.R."/>
            <person name="Clayton R.A."/>
            <person name="Sutton G.G."/>
            <person name="Fleischmann R.D."/>
            <person name="Ketchum K.A."/>
            <person name="Klenk H.-P."/>
            <person name="Gill S.R."/>
            <person name="Dougherty B.A."/>
            <person name="Nelson K.E."/>
            <person name="Quackenbush J."/>
            <person name="Zhou L."/>
            <person name="Kirkness E.F."/>
            <person name="Peterson S.N."/>
            <person name="Loftus B.J."/>
            <person name="Richardson D.L."/>
            <person name="Dodson R.J."/>
            <person name="Khalak H.G."/>
            <person name="Glodek A."/>
            <person name="McKenney K."/>
            <person name="FitzGerald L.M."/>
            <person name="Lee N."/>
            <person name="Adams M.D."/>
            <person name="Hickey E.K."/>
            <person name="Berg D.E."/>
            <person name="Gocayne J.D."/>
            <person name="Utterback T.R."/>
            <person name="Peterson J.D."/>
            <person name="Kelley J.M."/>
            <person name="Cotton M.D."/>
            <person name="Weidman J.F."/>
            <person name="Fujii C."/>
            <person name="Bowman C."/>
            <person name="Watthey L."/>
            <person name="Wallin E."/>
            <person name="Hayes W.S."/>
            <person name="Borodovsky M."/>
            <person name="Karp P.D."/>
            <person name="Smith H.O."/>
            <person name="Fraser C.M."/>
            <person name="Venter J.C."/>
        </authorList>
    </citation>
    <scope>NUCLEOTIDE SEQUENCE [LARGE SCALE GENOMIC DNA]</scope>
    <source>
        <strain>ATCC 700392 / 26695</strain>
    </source>
</reference>
<sequence length="461" mass="51619">MMANILGAGVYSDIFFVAFKLPNLFRRIFAEGSFSQSFLPSFIRSSIKGSFASLVGLIFCIVLFMWCLLVALNPLWLAKLLAYGFDEETLKLCAPIVAINFWYLLLVFITTFLGALLQYKHSFFASAYSASLLNVCMILALLISKEKTHLEALYYLSYGVLLGGVAQILLHFYPLVKLGLLNLLWKGFLSFKTKNAAKKKYRSKRIKRDLKGFFKQFLPSVLGNSSAQIASFLDTTIASFLASGSVSYLYYANRVFQLPLALFAIAISTALFPSIAIALKNNQQDLILQRLQKAWFFLVGVLLLCSIGGIMLSKEITELLFERGQFSPKDTLITSQVFSLYLLGLLPFGLTKLFSLWLYAKLEQKKAAKISLISLFLGLAASLSLMPLLGVLGLALANSLSGLFLFVLTIKAFGFQLFLGIIKNLKSWLVILFLACVEILLLLAFKSWVTHLYLFYYFQGF</sequence>
<gene>
    <name evidence="1" type="primary">murJ</name>
    <name type="synonym">mviN</name>
    <name type="ordered locus">HP_0885</name>
</gene>
<proteinExistence type="inferred from homology"/>
<name>MURJ_HELPY</name>
<protein>
    <recommendedName>
        <fullName evidence="1">Probable lipid II flippase MurJ</fullName>
    </recommendedName>
</protein>
<organism>
    <name type="scientific">Helicobacter pylori (strain ATCC 700392 / 26695)</name>
    <name type="common">Campylobacter pylori</name>
    <dbReference type="NCBI Taxonomy" id="85962"/>
    <lineage>
        <taxon>Bacteria</taxon>
        <taxon>Pseudomonadati</taxon>
        <taxon>Campylobacterota</taxon>
        <taxon>Epsilonproteobacteria</taxon>
        <taxon>Campylobacterales</taxon>
        <taxon>Helicobacteraceae</taxon>
        <taxon>Helicobacter</taxon>
    </lineage>
</organism>